<keyword id="KW-0349">Heme</keyword>
<keyword id="KW-0376">Hydrogen peroxide</keyword>
<keyword id="KW-0408">Iron</keyword>
<keyword id="KW-0479">Metal-binding</keyword>
<keyword id="KW-0560">Oxidoreductase</keyword>
<keyword id="KW-0575">Peroxidase</keyword>
<keyword id="KW-0732">Signal</keyword>
<proteinExistence type="inferred from homology"/>
<protein>
    <recommendedName>
        <fullName evidence="1">Catalase-peroxidase 1</fullName>
        <shortName evidence="1">CP 1</shortName>
        <ecNumber evidence="1">1.11.1.21</ecNumber>
    </recommendedName>
    <alternativeName>
        <fullName evidence="1">Peroxidase/catalase 1</fullName>
    </alternativeName>
</protein>
<reference key="1">
    <citation type="submission" date="2006-08" db="EMBL/GenBank/DDBJ databases">
        <title>Complete sequence of chromosome 1 of Shewanella sp. MR-7.</title>
        <authorList>
            <person name="Copeland A."/>
            <person name="Lucas S."/>
            <person name="Lapidus A."/>
            <person name="Barry K."/>
            <person name="Detter J.C."/>
            <person name="Glavina del Rio T."/>
            <person name="Hammon N."/>
            <person name="Israni S."/>
            <person name="Dalin E."/>
            <person name="Tice H."/>
            <person name="Pitluck S."/>
            <person name="Kiss H."/>
            <person name="Brettin T."/>
            <person name="Bruce D."/>
            <person name="Han C."/>
            <person name="Tapia R."/>
            <person name="Gilna P."/>
            <person name="Schmutz J."/>
            <person name="Larimer F."/>
            <person name="Land M."/>
            <person name="Hauser L."/>
            <person name="Kyrpides N."/>
            <person name="Mikhailova N."/>
            <person name="Nealson K."/>
            <person name="Konstantinidis K."/>
            <person name="Klappenbach J."/>
            <person name="Tiedje J."/>
            <person name="Richardson P."/>
        </authorList>
    </citation>
    <scope>NUCLEOTIDE SEQUENCE [LARGE SCALE GENOMIC DNA]</scope>
    <source>
        <strain>MR-7</strain>
    </source>
</reference>
<accession>Q0HQB2</accession>
<comment type="function">
    <text evidence="1">Bifunctional enzyme with both catalase and broad-spectrum peroxidase activity.</text>
</comment>
<comment type="catalytic activity">
    <reaction evidence="1">
        <text>H2O2 + AH2 = A + 2 H2O</text>
        <dbReference type="Rhea" id="RHEA:30275"/>
        <dbReference type="ChEBI" id="CHEBI:13193"/>
        <dbReference type="ChEBI" id="CHEBI:15377"/>
        <dbReference type="ChEBI" id="CHEBI:16240"/>
        <dbReference type="ChEBI" id="CHEBI:17499"/>
        <dbReference type="EC" id="1.11.1.21"/>
    </reaction>
</comment>
<comment type="catalytic activity">
    <reaction evidence="1">
        <text>2 H2O2 = O2 + 2 H2O</text>
        <dbReference type="Rhea" id="RHEA:20309"/>
        <dbReference type="ChEBI" id="CHEBI:15377"/>
        <dbReference type="ChEBI" id="CHEBI:15379"/>
        <dbReference type="ChEBI" id="CHEBI:16240"/>
        <dbReference type="EC" id="1.11.1.21"/>
    </reaction>
</comment>
<comment type="cofactor">
    <cofactor evidence="1">
        <name>heme b</name>
        <dbReference type="ChEBI" id="CHEBI:60344"/>
    </cofactor>
    <text evidence="1">Binds 1 heme b (iron(II)-protoporphyrin IX) group per dimer.</text>
</comment>
<comment type="subunit">
    <text evidence="1">Homodimer or homotetramer.</text>
</comment>
<comment type="PTM">
    <text evidence="1">Formation of the three residue Trp-Tyr-Met cross-link is important for the catalase, but not the peroxidase activity of the enzyme.</text>
</comment>
<comment type="similarity">
    <text evidence="1">Belongs to the peroxidase family. Peroxidase/catalase subfamily.</text>
</comment>
<evidence type="ECO:0000255" key="1">
    <source>
        <dbReference type="HAMAP-Rule" id="MF_01961"/>
    </source>
</evidence>
<name>KATG1_SHESR</name>
<organism>
    <name type="scientific">Shewanella sp. (strain MR-7)</name>
    <dbReference type="NCBI Taxonomy" id="60481"/>
    <lineage>
        <taxon>Bacteria</taxon>
        <taxon>Pseudomonadati</taxon>
        <taxon>Pseudomonadota</taxon>
        <taxon>Gammaproteobacteria</taxon>
        <taxon>Alteromonadales</taxon>
        <taxon>Shewanellaceae</taxon>
        <taxon>Shewanella</taxon>
    </lineage>
</organism>
<gene>
    <name evidence="1" type="primary">katG1</name>
    <name type="ordered locus">Shewmr7_3713</name>
</gene>
<feature type="signal peptide" evidence="1">
    <location>
        <begin position="1"/>
        <end position="22"/>
    </location>
</feature>
<feature type="chain" id="PRO_0000354926" description="Catalase-peroxidase 1">
    <location>
        <begin position="23"/>
        <end position="728"/>
    </location>
</feature>
<feature type="active site" description="Proton acceptor" evidence="1">
    <location>
        <position position="98"/>
    </location>
</feature>
<feature type="binding site" description="axial binding residue" evidence="1">
    <location>
        <position position="266"/>
    </location>
    <ligand>
        <name>heme b</name>
        <dbReference type="ChEBI" id="CHEBI:60344"/>
    </ligand>
    <ligandPart>
        <name>Fe</name>
        <dbReference type="ChEBI" id="CHEBI:18248"/>
    </ligandPart>
</feature>
<feature type="site" description="Transition state stabilizer" evidence="1">
    <location>
        <position position="94"/>
    </location>
</feature>
<feature type="cross-link" description="Tryptophyl-tyrosyl-methioninium (Trp-Tyr) (with M-251)" evidence="1">
    <location>
        <begin position="97"/>
        <end position="225"/>
    </location>
</feature>
<feature type="cross-link" description="Tryptophyl-tyrosyl-methioninium (Tyr-Met) (with W-97)" evidence="1">
    <location>
        <begin position="225"/>
        <end position="251"/>
    </location>
</feature>
<sequence>MDKTQSSQGKCPVMHGANSAVASNNMDWWPKALNLDILHQHDKKTDPMDPKFNYREAFNSLDLAAVKRDLNALMTDSQDWWPADWGHYGGLMIRMAWHSAGTYRVADGRGGAGTGNQRFAPLNSWPDNANLDKARRLLWPIKKKYGNKLSWADLMILAGNVAYESMGLKTYGFAGGREDIWHPEKDIYWGSEKQWLAPTENPNSRYSGERDLENPLAAVMMGLIYVNPEGVDGKPDPLRTAQDVRVTFARMAMNDEETVALTAGGHTVGKCHGNGKAQDLGPEPEGEELEAQGLGWLNKKGPGTGANAVTSGLEGAWTTHPTQWDNGYFHLLLNYDWELKKSPAGASQWEPINIKEEDKVVSVGDPNRKFNPIMTDADMAMKMDPEYRKISEKFYQDPAYFSEVFARAWFKLTHRDLGPKSRYLGPEVPNEDLLWQDPIPSVDYRLDASEIVDLKAKLLASGLSVSELVATAWDSARTFRGSDFRGGANGARIRLAPQKDWQANEPERLQKVLKVLTELQASLSKKVSIADLIVLGGAAAIEKAAHEAGVKVTVPFIPGRGDATQEMTDVESFAVLEPLHDAYRNWQKKDYVVQPEEMMLDRTQLMGLTAHEMTVLVGGMRVLGTNYGGTRHGVFTDKVGVLTNDFFVNLTDMAYNWKPAGSNLYQIVERKTGAVKWTASRVDLVFGSNSILRAYAEMYAQDDAKEKFVHDFVAAWTKVMNADRFDLA</sequence>
<dbReference type="EC" id="1.11.1.21" evidence="1"/>
<dbReference type="EMBL" id="CP000444">
    <property type="protein sequence ID" value="ABI44693.1"/>
    <property type="molecule type" value="Genomic_DNA"/>
</dbReference>
<dbReference type="SMR" id="Q0HQB2"/>
<dbReference type="PeroxiBase" id="3624">
    <property type="entry name" value="SHspCP02_MR-7"/>
</dbReference>
<dbReference type="KEGG" id="shm:Shewmr7_3713"/>
<dbReference type="HOGENOM" id="CLU_025424_2_0_6"/>
<dbReference type="GO" id="GO:0005829">
    <property type="term" value="C:cytosol"/>
    <property type="evidence" value="ECO:0007669"/>
    <property type="project" value="TreeGrafter"/>
</dbReference>
<dbReference type="GO" id="GO:0004096">
    <property type="term" value="F:catalase activity"/>
    <property type="evidence" value="ECO:0007669"/>
    <property type="project" value="UniProtKB-UniRule"/>
</dbReference>
<dbReference type="GO" id="GO:0020037">
    <property type="term" value="F:heme binding"/>
    <property type="evidence" value="ECO:0007669"/>
    <property type="project" value="InterPro"/>
</dbReference>
<dbReference type="GO" id="GO:0046872">
    <property type="term" value="F:metal ion binding"/>
    <property type="evidence" value="ECO:0007669"/>
    <property type="project" value="UniProtKB-KW"/>
</dbReference>
<dbReference type="GO" id="GO:0070301">
    <property type="term" value="P:cellular response to hydrogen peroxide"/>
    <property type="evidence" value="ECO:0007669"/>
    <property type="project" value="TreeGrafter"/>
</dbReference>
<dbReference type="GO" id="GO:0042744">
    <property type="term" value="P:hydrogen peroxide catabolic process"/>
    <property type="evidence" value="ECO:0007669"/>
    <property type="project" value="UniProtKB-KW"/>
</dbReference>
<dbReference type="CDD" id="cd00649">
    <property type="entry name" value="catalase_peroxidase_1"/>
    <property type="match status" value="1"/>
</dbReference>
<dbReference type="CDD" id="cd08200">
    <property type="entry name" value="catalase_peroxidase_2"/>
    <property type="match status" value="1"/>
</dbReference>
<dbReference type="FunFam" id="1.10.420.10:FF:000002">
    <property type="entry name" value="Catalase-peroxidase"/>
    <property type="match status" value="1"/>
</dbReference>
<dbReference type="FunFam" id="1.10.420.10:FF:000004">
    <property type="entry name" value="Catalase-peroxidase"/>
    <property type="match status" value="1"/>
</dbReference>
<dbReference type="FunFam" id="1.10.520.10:FF:000002">
    <property type="entry name" value="Catalase-peroxidase"/>
    <property type="match status" value="1"/>
</dbReference>
<dbReference type="Gene3D" id="1.10.520.10">
    <property type="match status" value="2"/>
</dbReference>
<dbReference type="Gene3D" id="1.10.420.10">
    <property type="entry name" value="Peroxidase, domain 2"/>
    <property type="match status" value="2"/>
</dbReference>
<dbReference type="HAMAP" id="MF_01961">
    <property type="entry name" value="Catal_peroxid"/>
    <property type="match status" value="1"/>
</dbReference>
<dbReference type="InterPro" id="IPR000763">
    <property type="entry name" value="Catalase_peroxidase"/>
</dbReference>
<dbReference type="InterPro" id="IPR002016">
    <property type="entry name" value="Haem_peroxidase"/>
</dbReference>
<dbReference type="InterPro" id="IPR010255">
    <property type="entry name" value="Haem_peroxidase_sf"/>
</dbReference>
<dbReference type="InterPro" id="IPR019794">
    <property type="entry name" value="Peroxidases_AS"/>
</dbReference>
<dbReference type="NCBIfam" id="TIGR00198">
    <property type="entry name" value="cat_per_HPI"/>
    <property type="match status" value="1"/>
</dbReference>
<dbReference type="NCBIfam" id="NF011635">
    <property type="entry name" value="PRK15061.1"/>
    <property type="match status" value="1"/>
</dbReference>
<dbReference type="PANTHER" id="PTHR30555:SF6">
    <property type="entry name" value="CATALASE-PEROXIDASE"/>
    <property type="match status" value="1"/>
</dbReference>
<dbReference type="PANTHER" id="PTHR30555">
    <property type="entry name" value="HYDROPEROXIDASE I, BIFUNCTIONAL CATALASE-PEROXIDASE"/>
    <property type="match status" value="1"/>
</dbReference>
<dbReference type="Pfam" id="PF00141">
    <property type="entry name" value="peroxidase"/>
    <property type="match status" value="2"/>
</dbReference>
<dbReference type="PRINTS" id="PR00460">
    <property type="entry name" value="BPEROXIDASE"/>
</dbReference>
<dbReference type="PRINTS" id="PR00458">
    <property type="entry name" value="PEROXIDASE"/>
</dbReference>
<dbReference type="SUPFAM" id="SSF48113">
    <property type="entry name" value="Heme-dependent peroxidases"/>
    <property type="match status" value="2"/>
</dbReference>
<dbReference type="PROSITE" id="PS00436">
    <property type="entry name" value="PEROXIDASE_2"/>
    <property type="match status" value="1"/>
</dbReference>
<dbReference type="PROSITE" id="PS50873">
    <property type="entry name" value="PEROXIDASE_4"/>
    <property type="match status" value="1"/>
</dbReference>